<sequence>MNQIKSNRELYLQYSASAPKLLAHVSKLLIFCRNSGISIPKGIRNIFEFTWEELINDPAVPTASEIQDLVVTFGTPTVVLAEVIPVQVLPMQKKQPPPAPPPTLMPAATSGGKYVPPTSTSAKLMPNGQNTLHKFQRQSIHLLTELLSLKMKAMVESASAGANPLDITKRFVEASQLLHLNAKEMAFDCLTGTVGKSCLSTAQLGKESSMNISAMGVNTPYQLVYQTSTACLSFSLCTGKESRKKDIGAKPKPVDDVSPQPVRARTPPENTVVELPDPCPEAREKLQDMCRHIEAERILWRGRNASCPMIFRNYRSRISSHLMLASKGDSHHPLTTGTQITASAPHQPSSQHAQMGRHSQEWKGPKKPIKLHYTFYDGSSFIYYPSGNIALLQIPTCCRGKPITCLFNDMPNTFLALFNAEGLGCVYYNLKNCCPYVLVLDEEGGITNDQKGYIVHRWSWASKTETLLSLEYKVNEQMKLTVLGQDSITVTFTSMNETVTISVSPKSCPHNVLHDKRPVRRISLMDEKVSKTNRALAEIKKRFQKTVTQFMNSVLLAAGLFTLEYPNPKETETSRVKLKPGSNQDRIRKTSLYQGENHMRIQSARQDSIINETLKEDSILTSLAHVQKKNGKVQVKVLPRGKRREVRSPTRWAASPSDCPLVLRRLILKEDIRAGCKCIVKAPLVSDLELERFLSAPRDPNQVLVFGIMSSQDPTLTAQLQWLMDTLYSHLQQGRSSPCIQCRHDPYRLLRYDLDSPLQKDPPLMVKKFAVIHGMVLMFAGGKLLFGGCVLNGYGFSKQNLLKQIFRAQQDCKMGYFLPDNYKFKHDAFKASRIAKPCGLSSRGVPSQFLGLETEPSMSTYVTNLDDTESTKKPPSDDYEGSVSSVALVDKIEKEPPPSPEKVKPPEIELQPFTKMRRSSKKTAGFKKLNSKK</sequence>
<keyword id="KW-0472">Membrane</keyword>
<keyword id="KW-1185">Reference proteome</keyword>
<keyword id="KW-0812">Transmembrane</keyword>
<keyword id="KW-1133">Transmembrane helix</keyword>
<dbReference type="EMBL" id="AK029822">
    <property type="protein sequence ID" value="BAC26632.1"/>
    <property type="molecule type" value="mRNA"/>
</dbReference>
<dbReference type="CCDS" id="CCDS51853.1"/>
<dbReference type="RefSeq" id="NP_941070.1">
    <property type="nucleotide sequence ID" value="NM_198668.2"/>
</dbReference>
<dbReference type="RefSeq" id="XP_006506395.1">
    <property type="nucleotide sequence ID" value="XM_006506332.4"/>
</dbReference>
<dbReference type="FunCoup" id="Q8CDN1">
    <property type="interactions" value="262"/>
</dbReference>
<dbReference type="STRING" id="10090.ENSMUSP00000146101"/>
<dbReference type="PhosphoSitePlus" id="Q8CDN1"/>
<dbReference type="jPOST" id="Q8CDN1"/>
<dbReference type="PaxDb" id="10090-ENSMUSP00000053778"/>
<dbReference type="PeptideAtlas" id="Q8CDN1"/>
<dbReference type="Antibodypedia" id="45080">
    <property type="antibodies" value="67 antibodies from 15 providers"/>
</dbReference>
<dbReference type="Ensembl" id="ENSMUST00000205686.2">
    <property type="protein sequence ID" value="ENSMUSP00000146101.2"/>
    <property type="gene ID" value="ENSMUSG00000034063.10"/>
</dbReference>
<dbReference type="GeneID" id="381798"/>
<dbReference type="KEGG" id="mmu:381798"/>
<dbReference type="UCSC" id="uc009cyl.1">
    <property type="organism name" value="mouse"/>
</dbReference>
<dbReference type="AGR" id="MGI:2685917"/>
<dbReference type="MGI" id="MGI:2685917">
    <property type="gene designation" value="4930590J08Rik"/>
</dbReference>
<dbReference type="VEuPathDB" id="HostDB:ENSMUSG00000034063"/>
<dbReference type="eggNOG" id="KOG4106">
    <property type="taxonomic scope" value="Eukaryota"/>
</dbReference>
<dbReference type="GeneTree" id="ENSGT00940000153655"/>
<dbReference type="HOGENOM" id="CLU_015383_0_0_1"/>
<dbReference type="InParanoid" id="Q8CDN1"/>
<dbReference type="OMA" id="QEMCRHI"/>
<dbReference type="OrthoDB" id="6351677at2759"/>
<dbReference type="PhylomeDB" id="Q8CDN1"/>
<dbReference type="TreeFam" id="TF333451"/>
<dbReference type="BioGRID-ORCS" id="381798">
    <property type="hits" value="3 hits in 78 CRISPR screens"/>
</dbReference>
<dbReference type="PRO" id="PR:Q8CDN1"/>
<dbReference type="Proteomes" id="UP000000589">
    <property type="component" value="Chromosome 6"/>
</dbReference>
<dbReference type="RNAct" id="Q8CDN1">
    <property type="molecule type" value="protein"/>
</dbReference>
<dbReference type="Bgee" id="ENSMUSG00000034063">
    <property type="expression patterns" value="Expressed in testis and 47 other cell types or tissues"/>
</dbReference>
<dbReference type="ExpressionAtlas" id="Q8CDN1">
    <property type="expression patterns" value="baseline and differential"/>
</dbReference>
<dbReference type="GO" id="GO:0005737">
    <property type="term" value="C:cytoplasm"/>
    <property type="evidence" value="ECO:0007669"/>
    <property type="project" value="Ensembl"/>
</dbReference>
<dbReference type="GO" id="GO:0016020">
    <property type="term" value="C:membrane"/>
    <property type="evidence" value="ECO:0007669"/>
    <property type="project" value="UniProtKB-SubCell"/>
</dbReference>
<dbReference type="InterPro" id="IPR029281">
    <property type="entry name" value="FAM194_C"/>
</dbReference>
<dbReference type="PANTHER" id="PTHR23093">
    <property type="entry name" value="SIMILAR TO CHROMOSOME 3 OPEN READING FRAME 20"/>
    <property type="match status" value="1"/>
</dbReference>
<dbReference type="PANTHER" id="PTHR23093:SF20">
    <property type="entry name" value="SIMILAR TO CHROMOSOME 3 OPEN READING FRAME 20"/>
    <property type="match status" value="1"/>
</dbReference>
<dbReference type="Pfam" id="PF14977">
    <property type="entry name" value="FAM194"/>
    <property type="match status" value="1"/>
</dbReference>
<accession>Q8CDN1</accession>
<proteinExistence type="evidence at transcript level"/>
<comment type="subcellular location">
    <subcellularLocation>
        <location evidence="3">Membrane</location>
        <topology evidence="3">Single-pass membrane protein</topology>
    </subcellularLocation>
</comment>
<protein>
    <recommendedName>
        <fullName>Uncharacterized protein C3orf20 homolog</fullName>
    </recommendedName>
</protein>
<reference key="1">
    <citation type="journal article" date="2005" name="Science">
        <title>The transcriptional landscape of the mammalian genome.</title>
        <authorList>
            <person name="Carninci P."/>
            <person name="Kasukawa T."/>
            <person name="Katayama S."/>
            <person name="Gough J."/>
            <person name="Frith M.C."/>
            <person name="Maeda N."/>
            <person name="Oyama R."/>
            <person name="Ravasi T."/>
            <person name="Lenhard B."/>
            <person name="Wells C."/>
            <person name="Kodzius R."/>
            <person name="Shimokawa K."/>
            <person name="Bajic V.B."/>
            <person name="Brenner S.E."/>
            <person name="Batalov S."/>
            <person name="Forrest A.R."/>
            <person name="Zavolan M."/>
            <person name="Davis M.J."/>
            <person name="Wilming L.G."/>
            <person name="Aidinis V."/>
            <person name="Allen J.E."/>
            <person name="Ambesi-Impiombato A."/>
            <person name="Apweiler R."/>
            <person name="Aturaliya R.N."/>
            <person name="Bailey T.L."/>
            <person name="Bansal M."/>
            <person name="Baxter L."/>
            <person name="Beisel K.W."/>
            <person name="Bersano T."/>
            <person name="Bono H."/>
            <person name="Chalk A.M."/>
            <person name="Chiu K.P."/>
            <person name="Choudhary V."/>
            <person name="Christoffels A."/>
            <person name="Clutterbuck D.R."/>
            <person name="Crowe M.L."/>
            <person name="Dalla E."/>
            <person name="Dalrymple B.P."/>
            <person name="de Bono B."/>
            <person name="Della Gatta G."/>
            <person name="di Bernardo D."/>
            <person name="Down T."/>
            <person name="Engstrom P."/>
            <person name="Fagiolini M."/>
            <person name="Faulkner G."/>
            <person name="Fletcher C.F."/>
            <person name="Fukushima T."/>
            <person name="Furuno M."/>
            <person name="Futaki S."/>
            <person name="Gariboldi M."/>
            <person name="Georgii-Hemming P."/>
            <person name="Gingeras T.R."/>
            <person name="Gojobori T."/>
            <person name="Green R.E."/>
            <person name="Gustincich S."/>
            <person name="Harbers M."/>
            <person name="Hayashi Y."/>
            <person name="Hensch T.K."/>
            <person name="Hirokawa N."/>
            <person name="Hill D."/>
            <person name="Huminiecki L."/>
            <person name="Iacono M."/>
            <person name="Ikeo K."/>
            <person name="Iwama A."/>
            <person name="Ishikawa T."/>
            <person name="Jakt M."/>
            <person name="Kanapin A."/>
            <person name="Katoh M."/>
            <person name="Kawasawa Y."/>
            <person name="Kelso J."/>
            <person name="Kitamura H."/>
            <person name="Kitano H."/>
            <person name="Kollias G."/>
            <person name="Krishnan S.P."/>
            <person name="Kruger A."/>
            <person name="Kummerfeld S.K."/>
            <person name="Kurochkin I.V."/>
            <person name="Lareau L.F."/>
            <person name="Lazarevic D."/>
            <person name="Lipovich L."/>
            <person name="Liu J."/>
            <person name="Liuni S."/>
            <person name="McWilliam S."/>
            <person name="Madan Babu M."/>
            <person name="Madera M."/>
            <person name="Marchionni L."/>
            <person name="Matsuda H."/>
            <person name="Matsuzawa S."/>
            <person name="Miki H."/>
            <person name="Mignone F."/>
            <person name="Miyake S."/>
            <person name="Morris K."/>
            <person name="Mottagui-Tabar S."/>
            <person name="Mulder N."/>
            <person name="Nakano N."/>
            <person name="Nakauchi H."/>
            <person name="Ng P."/>
            <person name="Nilsson R."/>
            <person name="Nishiguchi S."/>
            <person name="Nishikawa S."/>
            <person name="Nori F."/>
            <person name="Ohara O."/>
            <person name="Okazaki Y."/>
            <person name="Orlando V."/>
            <person name="Pang K.C."/>
            <person name="Pavan W.J."/>
            <person name="Pavesi G."/>
            <person name="Pesole G."/>
            <person name="Petrovsky N."/>
            <person name="Piazza S."/>
            <person name="Reed J."/>
            <person name="Reid J.F."/>
            <person name="Ring B.Z."/>
            <person name="Ringwald M."/>
            <person name="Rost B."/>
            <person name="Ruan Y."/>
            <person name="Salzberg S.L."/>
            <person name="Sandelin A."/>
            <person name="Schneider C."/>
            <person name="Schoenbach C."/>
            <person name="Sekiguchi K."/>
            <person name="Semple C.A."/>
            <person name="Seno S."/>
            <person name="Sessa L."/>
            <person name="Sheng Y."/>
            <person name="Shibata Y."/>
            <person name="Shimada H."/>
            <person name="Shimada K."/>
            <person name="Silva D."/>
            <person name="Sinclair B."/>
            <person name="Sperling S."/>
            <person name="Stupka E."/>
            <person name="Sugiura K."/>
            <person name="Sultana R."/>
            <person name="Takenaka Y."/>
            <person name="Taki K."/>
            <person name="Tammoja K."/>
            <person name="Tan S.L."/>
            <person name="Tang S."/>
            <person name="Taylor M.S."/>
            <person name="Tegner J."/>
            <person name="Teichmann S.A."/>
            <person name="Ueda H.R."/>
            <person name="van Nimwegen E."/>
            <person name="Verardo R."/>
            <person name="Wei C.L."/>
            <person name="Yagi K."/>
            <person name="Yamanishi H."/>
            <person name="Zabarovsky E."/>
            <person name="Zhu S."/>
            <person name="Zimmer A."/>
            <person name="Hide W."/>
            <person name="Bult C."/>
            <person name="Grimmond S.M."/>
            <person name="Teasdale R.D."/>
            <person name="Liu E.T."/>
            <person name="Brusic V."/>
            <person name="Quackenbush J."/>
            <person name="Wahlestedt C."/>
            <person name="Mattick J.S."/>
            <person name="Hume D.A."/>
            <person name="Kai C."/>
            <person name="Sasaki D."/>
            <person name="Tomaru Y."/>
            <person name="Fukuda S."/>
            <person name="Kanamori-Katayama M."/>
            <person name="Suzuki M."/>
            <person name="Aoki J."/>
            <person name="Arakawa T."/>
            <person name="Iida J."/>
            <person name="Imamura K."/>
            <person name="Itoh M."/>
            <person name="Kato T."/>
            <person name="Kawaji H."/>
            <person name="Kawagashira N."/>
            <person name="Kawashima T."/>
            <person name="Kojima M."/>
            <person name="Kondo S."/>
            <person name="Konno H."/>
            <person name="Nakano K."/>
            <person name="Ninomiya N."/>
            <person name="Nishio T."/>
            <person name="Okada M."/>
            <person name="Plessy C."/>
            <person name="Shibata K."/>
            <person name="Shiraki T."/>
            <person name="Suzuki S."/>
            <person name="Tagami M."/>
            <person name="Waki K."/>
            <person name="Watahiki A."/>
            <person name="Okamura-Oho Y."/>
            <person name="Suzuki H."/>
            <person name="Kawai J."/>
            <person name="Hayashizaki Y."/>
        </authorList>
    </citation>
    <scope>NUCLEOTIDE SEQUENCE [LARGE SCALE MRNA]</scope>
    <source>
        <strain>C57BL/6J</strain>
        <tissue>Testis</tissue>
    </source>
</reference>
<evidence type="ECO:0000255" key="1"/>
<evidence type="ECO:0000256" key="2">
    <source>
        <dbReference type="SAM" id="MobiDB-lite"/>
    </source>
</evidence>
<evidence type="ECO:0000305" key="3"/>
<organism>
    <name type="scientific">Mus musculus</name>
    <name type="common">Mouse</name>
    <dbReference type="NCBI Taxonomy" id="10090"/>
    <lineage>
        <taxon>Eukaryota</taxon>
        <taxon>Metazoa</taxon>
        <taxon>Chordata</taxon>
        <taxon>Craniata</taxon>
        <taxon>Vertebrata</taxon>
        <taxon>Euteleostomi</taxon>
        <taxon>Mammalia</taxon>
        <taxon>Eutheria</taxon>
        <taxon>Euarchontoglires</taxon>
        <taxon>Glires</taxon>
        <taxon>Rodentia</taxon>
        <taxon>Myomorpha</taxon>
        <taxon>Muroidea</taxon>
        <taxon>Muridae</taxon>
        <taxon>Murinae</taxon>
        <taxon>Mus</taxon>
        <taxon>Mus</taxon>
    </lineage>
</organism>
<name>CC020_MOUSE</name>
<feature type="chain" id="PRO_0000228844" description="Uncharacterized protein C3orf20 homolog">
    <location>
        <begin position="1"/>
        <end position="933"/>
    </location>
</feature>
<feature type="transmembrane region" description="Helical" evidence="1">
    <location>
        <begin position="771"/>
        <end position="791"/>
    </location>
</feature>
<feature type="region of interest" description="Disordered" evidence="2">
    <location>
        <begin position="244"/>
        <end position="277"/>
    </location>
</feature>
<feature type="region of interest" description="Disordered" evidence="2">
    <location>
        <begin position="343"/>
        <end position="364"/>
    </location>
</feature>
<feature type="region of interest" description="Disordered" evidence="2">
    <location>
        <begin position="890"/>
        <end position="933"/>
    </location>
</feature>
<feature type="compositionally biased region" description="Basic and acidic residues" evidence="2">
    <location>
        <begin position="244"/>
        <end position="255"/>
    </location>
</feature>
<feature type="compositionally biased region" description="Polar residues" evidence="2">
    <location>
        <begin position="343"/>
        <end position="353"/>
    </location>
</feature>
<feature type="compositionally biased region" description="Basic and acidic residues" evidence="2">
    <location>
        <begin position="890"/>
        <end position="907"/>
    </location>
</feature>
<feature type="compositionally biased region" description="Basic residues" evidence="2">
    <location>
        <begin position="915"/>
        <end position="933"/>
    </location>
</feature>